<reference key="1">
    <citation type="journal article" date="2005" name="Nucleic Acids Res.">
        <title>The genome sequence of Salmonella enterica serovar Choleraesuis, a highly invasive and resistant zoonotic pathogen.</title>
        <authorList>
            <person name="Chiu C.-H."/>
            <person name="Tang P."/>
            <person name="Chu C."/>
            <person name="Hu S."/>
            <person name="Bao Q."/>
            <person name="Yu J."/>
            <person name="Chou Y.-Y."/>
            <person name="Wang H.-S."/>
            <person name="Lee Y.-S."/>
        </authorList>
    </citation>
    <scope>NUCLEOTIDE SEQUENCE [LARGE SCALE GENOMIC DNA]</scope>
    <source>
        <strain>SC-B67</strain>
    </source>
</reference>
<keyword id="KW-0067">ATP-binding</keyword>
<keyword id="KW-0131">Cell cycle</keyword>
<keyword id="KW-0132">Cell division</keyword>
<keyword id="KW-0133">Cell shape</keyword>
<keyword id="KW-0961">Cell wall biogenesis/degradation</keyword>
<keyword id="KW-0963">Cytoplasm</keyword>
<keyword id="KW-0436">Ligase</keyword>
<keyword id="KW-0547">Nucleotide-binding</keyword>
<keyword id="KW-0573">Peptidoglycan synthesis</keyword>
<comment type="function">
    <text evidence="1">Cell wall formation.</text>
</comment>
<comment type="catalytic activity">
    <reaction evidence="1">
        <text>UDP-N-acetyl-alpha-D-muramate + L-alanine + ATP = UDP-N-acetyl-alpha-D-muramoyl-L-alanine + ADP + phosphate + H(+)</text>
        <dbReference type="Rhea" id="RHEA:23372"/>
        <dbReference type="ChEBI" id="CHEBI:15378"/>
        <dbReference type="ChEBI" id="CHEBI:30616"/>
        <dbReference type="ChEBI" id="CHEBI:43474"/>
        <dbReference type="ChEBI" id="CHEBI:57972"/>
        <dbReference type="ChEBI" id="CHEBI:70757"/>
        <dbReference type="ChEBI" id="CHEBI:83898"/>
        <dbReference type="ChEBI" id="CHEBI:456216"/>
        <dbReference type="EC" id="6.3.2.8"/>
    </reaction>
</comment>
<comment type="pathway">
    <text evidence="1">Cell wall biogenesis; peptidoglycan biosynthesis.</text>
</comment>
<comment type="subcellular location">
    <subcellularLocation>
        <location evidence="1">Cytoplasm</location>
    </subcellularLocation>
</comment>
<comment type="similarity">
    <text evidence="1">Belongs to the MurCDEF family.</text>
</comment>
<accession>Q57TC9</accession>
<proteinExistence type="inferred from homology"/>
<sequence length="491" mass="53486">MNTQQLAKLRSIVPEMRRVRHIHFVGIGGAGMGGIAEVLANEGYQISGSDLAPNPVTQQLTSLGATIFFNHRPENVRDASVVVVSSAISADNPEIVAAHEARIPVIRRAEMLAELMRFRHGIAIAGTHGKTTTTAMVSSIYAEAGLDPTFVNGGLVKAAGVHARLGHSRYLIAEADESDASFLHLQPMVAIVTNIEADHMDTYHGDFENLKQTFINFLHNLPFYGRAVMCVDDPVIRELLPRVGRQTTTYGFSEDADVRVEDYQQIGSQGHFTLLRQGMPDLHVTLNAPGRHNALNAAAAVAVATEEGIDDDAILRALESFQGTGRRFDFLGEFPLEPVNGKAGTAMLVDDYGHHPTEVDATIKAARAGWPDKKLVMLFQPHRYTRTRDLYDDFANVLTQVDALLMLDVYPAGEAPIPGADSRSLCRTIRNRGKIDPILVSDPAQVATMLAPVLTGNDLILVQGAGNVGKIARYLSEIKLKPQIQEEEQHG</sequence>
<gene>
    <name evidence="1" type="primary">murC</name>
    <name type="ordered locus">SCH_0126</name>
</gene>
<protein>
    <recommendedName>
        <fullName evidence="1">UDP-N-acetylmuramate--L-alanine ligase</fullName>
        <ecNumber evidence="1">6.3.2.8</ecNumber>
    </recommendedName>
    <alternativeName>
        <fullName evidence="1">UDP-N-acetylmuramoyl-L-alanine synthetase</fullName>
    </alternativeName>
</protein>
<organism>
    <name type="scientific">Salmonella choleraesuis (strain SC-B67)</name>
    <dbReference type="NCBI Taxonomy" id="321314"/>
    <lineage>
        <taxon>Bacteria</taxon>
        <taxon>Pseudomonadati</taxon>
        <taxon>Pseudomonadota</taxon>
        <taxon>Gammaproteobacteria</taxon>
        <taxon>Enterobacterales</taxon>
        <taxon>Enterobacteriaceae</taxon>
        <taxon>Salmonella</taxon>
    </lineage>
</organism>
<evidence type="ECO:0000255" key="1">
    <source>
        <dbReference type="HAMAP-Rule" id="MF_00046"/>
    </source>
</evidence>
<name>MURC_SALCH</name>
<feature type="chain" id="PRO_0000182145" description="UDP-N-acetylmuramate--L-alanine ligase">
    <location>
        <begin position="1"/>
        <end position="491"/>
    </location>
</feature>
<feature type="binding site" evidence="1">
    <location>
        <begin position="126"/>
        <end position="132"/>
    </location>
    <ligand>
        <name>ATP</name>
        <dbReference type="ChEBI" id="CHEBI:30616"/>
    </ligand>
</feature>
<dbReference type="EC" id="6.3.2.8" evidence="1"/>
<dbReference type="EMBL" id="AE017220">
    <property type="protein sequence ID" value="AAX64032.1"/>
    <property type="molecule type" value="Genomic_DNA"/>
</dbReference>
<dbReference type="RefSeq" id="WP_001538985.1">
    <property type="nucleotide sequence ID" value="NC_006905.1"/>
</dbReference>
<dbReference type="SMR" id="Q57TC9"/>
<dbReference type="KEGG" id="sec:SCH_0126"/>
<dbReference type="HOGENOM" id="CLU_028104_2_2_6"/>
<dbReference type="UniPathway" id="UPA00219"/>
<dbReference type="Proteomes" id="UP000000538">
    <property type="component" value="Chromosome"/>
</dbReference>
<dbReference type="GO" id="GO:0005737">
    <property type="term" value="C:cytoplasm"/>
    <property type="evidence" value="ECO:0007669"/>
    <property type="project" value="UniProtKB-SubCell"/>
</dbReference>
<dbReference type="GO" id="GO:0005524">
    <property type="term" value="F:ATP binding"/>
    <property type="evidence" value="ECO:0007669"/>
    <property type="project" value="UniProtKB-UniRule"/>
</dbReference>
<dbReference type="GO" id="GO:0008763">
    <property type="term" value="F:UDP-N-acetylmuramate-L-alanine ligase activity"/>
    <property type="evidence" value="ECO:0007669"/>
    <property type="project" value="UniProtKB-UniRule"/>
</dbReference>
<dbReference type="GO" id="GO:0051301">
    <property type="term" value="P:cell division"/>
    <property type="evidence" value="ECO:0007669"/>
    <property type="project" value="UniProtKB-KW"/>
</dbReference>
<dbReference type="GO" id="GO:0071555">
    <property type="term" value="P:cell wall organization"/>
    <property type="evidence" value="ECO:0007669"/>
    <property type="project" value="UniProtKB-KW"/>
</dbReference>
<dbReference type="GO" id="GO:0009252">
    <property type="term" value="P:peptidoglycan biosynthetic process"/>
    <property type="evidence" value="ECO:0007669"/>
    <property type="project" value="UniProtKB-UniRule"/>
</dbReference>
<dbReference type="GO" id="GO:0008360">
    <property type="term" value="P:regulation of cell shape"/>
    <property type="evidence" value="ECO:0007669"/>
    <property type="project" value="UniProtKB-KW"/>
</dbReference>
<dbReference type="FunFam" id="3.40.1190.10:FF:000001">
    <property type="entry name" value="UDP-N-acetylmuramate--L-alanine ligase"/>
    <property type="match status" value="1"/>
</dbReference>
<dbReference type="FunFam" id="3.40.50.720:FF:000046">
    <property type="entry name" value="UDP-N-acetylmuramate--L-alanine ligase"/>
    <property type="match status" value="1"/>
</dbReference>
<dbReference type="FunFam" id="3.90.190.20:FF:000001">
    <property type="entry name" value="UDP-N-acetylmuramate--L-alanine ligase"/>
    <property type="match status" value="1"/>
</dbReference>
<dbReference type="Gene3D" id="3.90.190.20">
    <property type="entry name" value="Mur ligase, C-terminal domain"/>
    <property type="match status" value="1"/>
</dbReference>
<dbReference type="Gene3D" id="3.40.1190.10">
    <property type="entry name" value="Mur-like, catalytic domain"/>
    <property type="match status" value="1"/>
</dbReference>
<dbReference type="Gene3D" id="3.40.50.720">
    <property type="entry name" value="NAD(P)-binding Rossmann-like Domain"/>
    <property type="match status" value="1"/>
</dbReference>
<dbReference type="HAMAP" id="MF_00046">
    <property type="entry name" value="MurC"/>
    <property type="match status" value="1"/>
</dbReference>
<dbReference type="InterPro" id="IPR036565">
    <property type="entry name" value="Mur-like_cat_sf"/>
</dbReference>
<dbReference type="InterPro" id="IPR004101">
    <property type="entry name" value="Mur_ligase_C"/>
</dbReference>
<dbReference type="InterPro" id="IPR036615">
    <property type="entry name" value="Mur_ligase_C_dom_sf"/>
</dbReference>
<dbReference type="InterPro" id="IPR013221">
    <property type="entry name" value="Mur_ligase_cen"/>
</dbReference>
<dbReference type="InterPro" id="IPR000713">
    <property type="entry name" value="Mur_ligase_N"/>
</dbReference>
<dbReference type="InterPro" id="IPR050061">
    <property type="entry name" value="MurCDEF_pg_biosynth"/>
</dbReference>
<dbReference type="InterPro" id="IPR005758">
    <property type="entry name" value="UDP-N-AcMur_Ala_ligase_MurC"/>
</dbReference>
<dbReference type="NCBIfam" id="TIGR01082">
    <property type="entry name" value="murC"/>
    <property type="match status" value="1"/>
</dbReference>
<dbReference type="PANTHER" id="PTHR43445:SF3">
    <property type="entry name" value="UDP-N-ACETYLMURAMATE--L-ALANINE LIGASE"/>
    <property type="match status" value="1"/>
</dbReference>
<dbReference type="PANTHER" id="PTHR43445">
    <property type="entry name" value="UDP-N-ACETYLMURAMATE--L-ALANINE LIGASE-RELATED"/>
    <property type="match status" value="1"/>
</dbReference>
<dbReference type="Pfam" id="PF01225">
    <property type="entry name" value="Mur_ligase"/>
    <property type="match status" value="1"/>
</dbReference>
<dbReference type="Pfam" id="PF02875">
    <property type="entry name" value="Mur_ligase_C"/>
    <property type="match status" value="1"/>
</dbReference>
<dbReference type="Pfam" id="PF08245">
    <property type="entry name" value="Mur_ligase_M"/>
    <property type="match status" value="1"/>
</dbReference>
<dbReference type="SUPFAM" id="SSF51984">
    <property type="entry name" value="MurCD N-terminal domain"/>
    <property type="match status" value="1"/>
</dbReference>
<dbReference type="SUPFAM" id="SSF53623">
    <property type="entry name" value="MurD-like peptide ligases, catalytic domain"/>
    <property type="match status" value="1"/>
</dbReference>
<dbReference type="SUPFAM" id="SSF53244">
    <property type="entry name" value="MurD-like peptide ligases, peptide-binding domain"/>
    <property type="match status" value="1"/>
</dbReference>